<comment type="function">
    <text evidence="1">DNA-dependent RNA polymerase catalyzes the transcription of DNA into RNA using the four ribonucleoside triphosphates as substrates.</text>
</comment>
<comment type="catalytic activity">
    <reaction evidence="1">
        <text>RNA(n) + a ribonucleoside 5'-triphosphate = RNA(n+1) + diphosphate</text>
        <dbReference type="Rhea" id="RHEA:21248"/>
        <dbReference type="Rhea" id="RHEA-COMP:14527"/>
        <dbReference type="Rhea" id="RHEA-COMP:17342"/>
        <dbReference type="ChEBI" id="CHEBI:33019"/>
        <dbReference type="ChEBI" id="CHEBI:61557"/>
        <dbReference type="ChEBI" id="CHEBI:140395"/>
        <dbReference type="EC" id="2.7.7.6"/>
    </reaction>
</comment>
<comment type="subunit">
    <text evidence="1">In plastids the minimal PEP RNA polymerase catalytic core is composed of four subunits: alpha, beta, beta', and beta''. When a (nuclear-encoded) sigma factor is associated with the core the holoenzyme is formed, which can initiate transcription.</text>
</comment>
<comment type="subcellular location">
    <subcellularLocation>
        <location>Plastid</location>
        <location>Chloroplast</location>
    </subcellularLocation>
</comment>
<comment type="domain">
    <text evidence="1">The N-terminal domain is essential for RNAP assembly and basal transcription, whereas the C-terminal domain is involved in interaction with transcriptional regulators and with upstream promoter elements.</text>
</comment>
<comment type="similarity">
    <text evidence="1">Belongs to the RNA polymerase alpha chain family.</text>
</comment>
<dbReference type="EC" id="2.7.7.6" evidence="1"/>
<dbReference type="EMBL" id="AP004638">
    <property type="protein sequence ID" value="BAB84248.1"/>
    <property type="molecule type" value="Genomic_DNA"/>
</dbReference>
<dbReference type="RefSeq" id="NP_569660.1">
    <property type="nucleotide sequence ID" value="NC_003386.1"/>
</dbReference>
<dbReference type="SMR" id="Q8WHZ1"/>
<dbReference type="GeneID" id="2545166"/>
<dbReference type="GO" id="GO:0009507">
    <property type="term" value="C:chloroplast"/>
    <property type="evidence" value="ECO:0007669"/>
    <property type="project" value="UniProtKB-SubCell"/>
</dbReference>
<dbReference type="GO" id="GO:0000428">
    <property type="term" value="C:DNA-directed RNA polymerase complex"/>
    <property type="evidence" value="ECO:0007669"/>
    <property type="project" value="UniProtKB-KW"/>
</dbReference>
<dbReference type="GO" id="GO:0005739">
    <property type="term" value="C:mitochondrion"/>
    <property type="evidence" value="ECO:0007669"/>
    <property type="project" value="GOC"/>
</dbReference>
<dbReference type="GO" id="GO:0003677">
    <property type="term" value="F:DNA binding"/>
    <property type="evidence" value="ECO:0007669"/>
    <property type="project" value="UniProtKB-UniRule"/>
</dbReference>
<dbReference type="GO" id="GO:0003899">
    <property type="term" value="F:DNA-directed RNA polymerase activity"/>
    <property type="evidence" value="ECO:0007669"/>
    <property type="project" value="UniProtKB-UniRule"/>
</dbReference>
<dbReference type="GO" id="GO:0046983">
    <property type="term" value="F:protein dimerization activity"/>
    <property type="evidence" value="ECO:0007669"/>
    <property type="project" value="InterPro"/>
</dbReference>
<dbReference type="GO" id="GO:0006351">
    <property type="term" value="P:DNA-templated transcription"/>
    <property type="evidence" value="ECO:0007669"/>
    <property type="project" value="UniProtKB-UniRule"/>
</dbReference>
<dbReference type="CDD" id="cd06928">
    <property type="entry name" value="RNAP_alpha_NTD"/>
    <property type="match status" value="1"/>
</dbReference>
<dbReference type="FunFam" id="2.170.120.12:FF:000001">
    <property type="entry name" value="DNA-directed RNA polymerase subunit alpha"/>
    <property type="match status" value="1"/>
</dbReference>
<dbReference type="Gene3D" id="1.10.150.20">
    <property type="entry name" value="5' to 3' exonuclease, C-terminal subdomain"/>
    <property type="match status" value="1"/>
</dbReference>
<dbReference type="Gene3D" id="2.170.120.12">
    <property type="entry name" value="DNA-directed RNA polymerase, insert domain"/>
    <property type="match status" value="1"/>
</dbReference>
<dbReference type="Gene3D" id="3.30.1360.10">
    <property type="entry name" value="RNA polymerase, RBP11-like subunit"/>
    <property type="match status" value="1"/>
</dbReference>
<dbReference type="HAMAP" id="MF_00059">
    <property type="entry name" value="RNApol_bact_RpoA"/>
    <property type="match status" value="1"/>
</dbReference>
<dbReference type="InterPro" id="IPR011262">
    <property type="entry name" value="DNA-dir_RNA_pol_insert"/>
</dbReference>
<dbReference type="InterPro" id="IPR011263">
    <property type="entry name" value="DNA-dir_RNA_pol_RpoA/D/Rpb3"/>
</dbReference>
<dbReference type="InterPro" id="IPR011773">
    <property type="entry name" value="DNA-dir_RpoA"/>
</dbReference>
<dbReference type="InterPro" id="IPR036603">
    <property type="entry name" value="RBP11-like"/>
</dbReference>
<dbReference type="InterPro" id="IPR011260">
    <property type="entry name" value="RNAP_asu_C"/>
</dbReference>
<dbReference type="InterPro" id="IPR036643">
    <property type="entry name" value="RNApol_insert_sf"/>
</dbReference>
<dbReference type="NCBIfam" id="TIGR02027">
    <property type="entry name" value="rpoA"/>
    <property type="match status" value="1"/>
</dbReference>
<dbReference type="Pfam" id="PF01000">
    <property type="entry name" value="RNA_pol_A_bac"/>
    <property type="match status" value="1"/>
</dbReference>
<dbReference type="Pfam" id="PF03118">
    <property type="entry name" value="RNA_pol_A_CTD"/>
    <property type="match status" value="1"/>
</dbReference>
<dbReference type="Pfam" id="PF01193">
    <property type="entry name" value="RNA_pol_L"/>
    <property type="match status" value="1"/>
</dbReference>
<dbReference type="SMART" id="SM00662">
    <property type="entry name" value="RPOLD"/>
    <property type="match status" value="1"/>
</dbReference>
<dbReference type="SUPFAM" id="SSF47789">
    <property type="entry name" value="C-terminal domain of RNA polymerase alpha subunit"/>
    <property type="match status" value="1"/>
</dbReference>
<dbReference type="SUPFAM" id="SSF56553">
    <property type="entry name" value="Insert subdomain of RNA polymerase alpha subunit"/>
    <property type="match status" value="1"/>
</dbReference>
<dbReference type="SUPFAM" id="SSF55257">
    <property type="entry name" value="RBP11-like subunits of RNA polymerase"/>
    <property type="match status" value="1"/>
</dbReference>
<name>RPOA_PSINU</name>
<gene>
    <name evidence="1" type="primary">rpoA</name>
</gene>
<reference key="1">
    <citation type="journal article" date="2004" name="Mol. Biol. Evol.">
        <title>Chloroplast phylogeny indicates that bryophytes are monophyletic.</title>
        <authorList>
            <person name="Nishiyama T."/>
            <person name="Wolf P.G."/>
            <person name="Kugita M."/>
            <person name="Sinclair R.B."/>
            <person name="Sugita M."/>
            <person name="Sugiura C."/>
            <person name="Wakasugi T."/>
            <person name="Yamada K."/>
            <person name="Yoshinaga K."/>
            <person name="Yamaguchi K."/>
            <person name="Ueda K."/>
            <person name="Hasebe M."/>
        </authorList>
    </citation>
    <scope>NUCLEOTIDE SEQUENCE [LARGE SCALE GENOMIC DNA]</scope>
    <source>
        <strain>Kingyoku</strain>
    </source>
</reference>
<keyword id="KW-0150">Chloroplast</keyword>
<keyword id="KW-0240">DNA-directed RNA polymerase</keyword>
<keyword id="KW-0548">Nucleotidyltransferase</keyword>
<keyword id="KW-0934">Plastid</keyword>
<keyword id="KW-0804">Transcription</keyword>
<keyword id="KW-0808">Transferase</keyword>
<proteinExistence type="inferred from homology"/>
<organism>
    <name type="scientific">Psilotum nudum</name>
    <name type="common">Whisk fern</name>
    <name type="synonym">Lycopodium nudum</name>
    <dbReference type="NCBI Taxonomy" id="3240"/>
    <lineage>
        <taxon>Eukaryota</taxon>
        <taxon>Viridiplantae</taxon>
        <taxon>Streptophyta</taxon>
        <taxon>Embryophyta</taxon>
        <taxon>Tracheophyta</taxon>
        <taxon>Polypodiopsida</taxon>
        <taxon>Ophioglossidae</taxon>
        <taxon>Psilotales</taxon>
        <taxon>Psilotaceae</taxon>
        <taxon>Psilotum</taxon>
    </lineage>
</organism>
<feature type="chain" id="PRO_0000175489" description="DNA-directed RNA polymerase subunit alpha">
    <location>
        <begin position="1"/>
        <end position="340"/>
    </location>
</feature>
<feature type="region of interest" description="Alpha N-terminal domain (alpha-NTD)" evidence="1">
    <location>
        <begin position="1"/>
        <end position="233"/>
    </location>
</feature>
<feature type="region of interest" description="Alpha C-terminal domain (alpha-CTD)" evidence="1">
    <location>
        <begin position="264"/>
        <end position="340"/>
    </location>
</feature>
<geneLocation type="chloroplast"/>
<protein>
    <recommendedName>
        <fullName evidence="1">DNA-directed RNA polymerase subunit alpha</fullName>
        <shortName evidence="1">PEP</shortName>
        <ecNumber evidence="1">2.7.7.6</ecNumber>
    </recommendedName>
    <alternativeName>
        <fullName evidence="1">Plastid-encoded RNA polymerase subunit alpha</fullName>
        <shortName evidence="1">RNA polymerase subunit alpha</shortName>
    </alternativeName>
</protein>
<evidence type="ECO:0000255" key="1">
    <source>
        <dbReference type="HAMAP-Rule" id="MF_00059"/>
    </source>
</evidence>
<sequence>MIQDEIPIPVQTLQWKCIESKKEGKRLHYGRFAVSPFRKGQASTVGVAMRRALLGEVEGTSITYAKFKNVVHEYSTLVGIKESIHDILINLKEIVLQSDSYETQKASISILGPRDVTAGDILLPTSVKIIDASQHIATITTAIPLDVELRIERDCGYRTLNLKESQSGEFFIDALFTPIRNANYSIHSFESNNKVREILFLEVWTNGSLTPGAALSEASRDLIDLFIIFLNMEKEESIKEIENNELNIKNFPSTSISVDIDRMAKEVAFKQIFIDQLELPARAYNCLKKMQVHTVSDLLKYTQYDLKKVKNFGNKSVEQVVEALQERFAIQLPKDQFNIS</sequence>
<accession>Q8WHZ1</accession>